<feature type="chain" id="PRO_1000140067" description="CCA-adding enzyme">
    <location>
        <begin position="1"/>
        <end position="397"/>
    </location>
</feature>
<feature type="binding site" evidence="1">
    <location>
        <position position="27"/>
    </location>
    <ligand>
        <name>ATP</name>
        <dbReference type="ChEBI" id="CHEBI:30616"/>
    </ligand>
</feature>
<feature type="binding site" evidence="1">
    <location>
        <position position="27"/>
    </location>
    <ligand>
        <name>CTP</name>
        <dbReference type="ChEBI" id="CHEBI:37563"/>
    </ligand>
</feature>
<feature type="binding site" evidence="1">
    <location>
        <position position="30"/>
    </location>
    <ligand>
        <name>ATP</name>
        <dbReference type="ChEBI" id="CHEBI:30616"/>
    </ligand>
</feature>
<feature type="binding site" evidence="1">
    <location>
        <position position="30"/>
    </location>
    <ligand>
        <name>CTP</name>
        <dbReference type="ChEBI" id="CHEBI:37563"/>
    </ligand>
</feature>
<feature type="binding site" evidence="1">
    <location>
        <position position="40"/>
    </location>
    <ligand>
        <name>Mg(2+)</name>
        <dbReference type="ChEBI" id="CHEBI:18420"/>
    </ligand>
</feature>
<feature type="binding site" evidence="1">
    <location>
        <position position="42"/>
    </location>
    <ligand>
        <name>Mg(2+)</name>
        <dbReference type="ChEBI" id="CHEBI:18420"/>
    </ligand>
</feature>
<feature type="binding site" evidence="1">
    <location>
        <position position="111"/>
    </location>
    <ligand>
        <name>ATP</name>
        <dbReference type="ChEBI" id="CHEBI:30616"/>
    </ligand>
</feature>
<feature type="binding site" evidence="1">
    <location>
        <position position="111"/>
    </location>
    <ligand>
        <name>CTP</name>
        <dbReference type="ChEBI" id="CHEBI:37563"/>
    </ligand>
</feature>
<feature type="binding site" evidence="1">
    <location>
        <position position="154"/>
    </location>
    <ligand>
        <name>ATP</name>
        <dbReference type="ChEBI" id="CHEBI:30616"/>
    </ligand>
</feature>
<feature type="binding site" evidence="1">
    <location>
        <position position="154"/>
    </location>
    <ligand>
        <name>CTP</name>
        <dbReference type="ChEBI" id="CHEBI:37563"/>
    </ligand>
</feature>
<feature type="binding site" evidence="1">
    <location>
        <position position="157"/>
    </location>
    <ligand>
        <name>ATP</name>
        <dbReference type="ChEBI" id="CHEBI:30616"/>
    </ligand>
</feature>
<feature type="binding site" evidence="1">
    <location>
        <position position="157"/>
    </location>
    <ligand>
        <name>CTP</name>
        <dbReference type="ChEBI" id="CHEBI:37563"/>
    </ligand>
</feature>
<feature type="binding site" evidence="1">
    <location>
        <position position="160"/>
    </location>
    <ligand>
        <name>ATP</name>
        <dbReference type="ChEBI" id="CHEBI:30616"/>
    </ligand>
</feature>
<feature type="binding site" evidence="1">
    <location>
        <position position="160"/>
    </location>
    <ligand>
        <name>CTP</name>
        <dbReference type="ChEBI" id="CHEBI:37563"/>
    </ligand>
</feature>
<feature type="binding site" evidence="1">
    <location>
        <position position="163"/>
    </location>
    <ligand>
        <name>ATP</name>
        <dbReference type="ChEBI" id="CHEBI:30616"/>
    </ligand>
</feature>
<feature type="binding site" evidence="1">
    <location>
        <position position="163"/>
    </location>
    <ligand>
        <name>CTP</name>
        <dbReference type="ChEBI" id="CHEBI:37563"/>
    </ligand>
</feature>
<evidence type="ECO:0000255" key="1">
    <source>
        <dbReference type="HAMAP-Rule" id="MF_01263"/>
    </source>
</evidence>
<sequence length="397" mass="46062">MNEQFRQALSVIETLKRHGHEAYFVGGAVRDYLLQRPIGDIDIATSAHPQEVMAIFPRTVPVGIAHGTVMVIERGISYEVTTFRKEGRYEDYRRPKDVTFVRSLNEDLQRRDFTMNAIAMNEYGEIIDPFGGVEALKQRIIETVGDPAERFNEDALRMMRALRFVSQLGFSLSTETKQAIIRYGHLLQHIAVERIAVEFEKLLLGPFVSKAIALLVETNLFAYLPELATKKEELIKLSSYSLVPVDRIEAWARFAFVVHFHREQLKNWKLSNHLIRDILICLKALEHIRSLTDWTIDALYEYGPYIPHIERIRAAVYDDKPSVHSLLKQWEMLPIRNRKELAINGHDLLILFGKKGGPWLSEMIENIERAVLHRQVENEKEKLKEWAMCNQKRENNC</sequence>
<comment type="function">
    <text evidence="1">Catalyzes the addition and repair of the essential 3'-terminal CCA sequence in tRNAs without using a nucleic acid template. Adds these three nucleotides in the order of C, C, and A to the tRNA nucleotide-73, using CTP and ATP as substrates and producing inorganic pyrophosphate. tRNA 3'-terminal CCA addition is required both for tRNA processing and repair. Also involved in tRNA surveillance by mediating tandem CCA addition to generate a CCACCA at the 3' terminus of unstable tRNAs. While stable tRNAs receive only 3'-terminal CCA, unstable tRNAs are marked with CCACCA and rapidly degraded.</text>
</comment>
<comment type="catalytic activity">
    <reaction evidence="1">
        <text>a tRNA precursor + 2 CTP + ATP = a tRNA with a 3' CCA end + 3 diphosphate</text>
        <dbReference type="Rhea" id="RHEA:14433"/>
        <dbReference type="Rhea" id="RHEA-COMP:10465"/>
        <dbReference type="Rhea" id="RHEA-COMP:10468"/>
        <dbReference type="ChEBI" id="CHEBI:30616"/>
        <dbReference type="ChEBI" id="CHEBI:33019"/>
        <dbReference type="ChEBI" id="CHEBI:37563"/>
        <dbReference type="ChEBI" id="CHEBI:74896"/>
        <dbReference type="ChEBI" id="CHEBI:83071"/>
        <dbReference type="EC" id="2.7.7.72"/>
    </reaction>
</comment>
<comment type="catalytic activity">
    <reaction evidence="1">
        <text>a tRNA with a 3' CCA end + 2 CTP + ATP = a tRNA with a 3' CCACCA end + 3 diphosphate</text>
        <dbReference type="Rhea" id="RHEA:76235"/>
        <dbReference type="Rhea" id="RHEA-COMP:10468"/>
        <dbReference type="Rhea" id="RHEA-COMP:18655"/>
        <dbReference type="ChEBI" id="CHEBI:30616"/>
        <dbReference type="ChEBI" id="CHEBI:33019"/>
        <dbReference type="ChEBI" id="CHEBI:37563"/>
        <dbReference type="ChEBI" id="CHEBI:83071"/>
        <dbReference type="ChEBI" id="CHEBI:195187"/>
    </reaction>
    <physiologicalReaction direction="left-to-right" evidence="1">
        <dbReference type="Rhea" id="RHEA:76236"/>
    </physiologicalReaction>
</comment>
<comment type="cofactor">
    <cofactor evidence="1">
        <name>Mg(2+)</name>
        <dbReference type="ChEBI" id="CHEBI:18420"/>
    </cofactor>
</comment>
<comment type="subunit">
    <text evidence="1">Homodimer.</text>
</comment>
<comment type="miscellaneous">
    <text evidence="1">A single active site specifically recognizes both ATP and CTP and is responsible for their addition.</text>
</comment>
<comment type="similarity">
    <text evidence="1">Belongs to the tRNA nucleotidyltransferase/poly(A) polymerase family. Bacterial CCA-adding enzyme type 3 subfamily.</text>
</comment>
<dbReference type="EC" id="2.7.7.72" evidence="1"/>
<dbReference type="EMBL" id="CP000922">
    <property type="protein sequence ID" value="ACJ33500.1"/>
    <property type="molecule type" value="Genomic_DNA"/>
</dbReference>
<dbReference type="RefSeq" id="WP_012574753.1">
    <property type="nucleotide sequence ID" value="NC_011567.1"/>
</dbReference>
<dbReference type="SMR" id="B7GHS8"/>
<dbReference type="STRING" id="491915.Aflv_1124"/>
<dbReference type="GeneID" id="7037381"/>
<dbReference type="KEGG" id="afl:Aflv_1124"/>
<dbReference type="PATRIC" id="fig|491915.6.peg.1147"/>
<dbReference type="eggNOG" id="COG0617">
    <property type="taxonomic scope" value="Bacteria"/>
</dbReference>
<dbReference type="HOGENOM" id="CLU_015961_3_0_9"/>
<dbReference type="Proteomes" id="UP000000742">
    <property type="component" value="Chromosome"/>
</dbReference>
<dbReference type="GO" id="GO:0005524">
    <property type="term" value="F:ATP binding"/>
    <property type="evidence" value="ECO:0007669"/>
    <property type="project" value="UniProtKB-UniRule"/>
</dbReference>
<dbReference type="GO" id="GO:0004810">
    <property type="term" value="F:CCA tRNA nucleotidyltransferase activity"/>
    <property type="evidence" value="ECO:0007669"/>
    <property type="project" value="UniProtKB-UniRule"/>
</dbReference>
<dbReference type="GO" id="GO:0000287">
    <property type="term" value="F:magnesium ion binding"/>
    <property type="evidence" value="ECO:0007669"/>
    <property type="project" value="UniProtKB-UniRule"/>
</dbReference>
<dbReference type="GO" id="GO:0000049">
    <property type="term" value="F:tRNA binding"/>
    <property type="evidence" value="ECO:0007669"/>
    <property type="project" value="UniProtKB-UniRule"/>
</dbReference>
<dbReference type="GO" id="GO:0042245">
    <property type="term" value="P:RNA repair"/>
    <property type="evidence" value="ECO:0007669"/>
    <property type="project" value="UniProtKB-KW"/>
</dbReference>
<dbReference type="GO" id="GO:0001680">
    <property type="term" value="P:tRNA 3'-terminal CCA addition"/>
    <property type="evidence" value="ECO:0007669"/>
    <property type="project" value="UniProtKB-UniRule"/>
</dbReference>
<dbReference type="CDD" id="cd05398">
    <property type="entry name" value="NT_ClassII-CCAase"/>
    <property type="match status" value="1"/>
</dbReference>
<dbReference type="Gene3D" id="1.10.110.30">
    <property type="match status" value="1"/>
</dbReference>
<dbReference type="Gene3D" id="1.10.246.80">
    <property type="match status" value="1"/>
</dbReference>
<dbReference type="Gene3D" id="1.20.58.560">
    <property type="match status" value="1"/>
</dbReference>
<dbReference type="Gene3D" id="3.30.460.10">
    <property type="entry name" value="Beta Polymerase, domain 2"/>
    <property type="match status" value="1"/>
</dbReference>
<dbReference type="HAMAP" id="MF_01263">
    <property type="entry name" value="CCA_bact_type3"/>
    <property type="match status" value="1"/>
</dbReference>
<dbReference type="InterPro" id="IPR050264">
    <property type="entry name" value="Bact_CCA-adding_enz_type3_sf"/>
</dbReference>
<dbReference type="InterPro" id="IPR032810">
    <property type="entry name" value="CCA-adding_enz_C"/>
</dbReference>
<dbReference type="InterPro" id="IPR023068">
    <property type="entry name" value="CCA-adding_enz_firmicutes"/>
</dbReference>
<dbReference type="InterPro" id="IPR043519">
    <property type="entry name" value="NT_sf"/>
</dbReference>
<dbReference type="InterPro" id="IPR002646">
    <property type="entry name" value="PolA_pol_head_dom"/>
</dbReference>
<dbReference type="InterPro" id="IPR032828">
    <property type="entry name" value="PolyA_RNA-bd"/>
</dbReference>
<dbReference type="NCBIfam" id="NF009814">
    <property type="entry name" value="PRK13299.1"/>
    <property type="match status" value="1"/>
</dbReference>
<dbReference type="PANTHER" id="PTHR46173">
    <property type="entry name" value="CCA TRNA NUCLEOTIDYLTRANSFERASE 1, MITOCHONDRIAL"/>
    <property type="match status" value="1"/>
</dbReference>
<dbReference type="PANTHER" id="PTHR46173:SF1">
    <property type="entry name" value="CCA TRNA NUCLEOTIDYLTRANSFERASE 1, MITOCHONDRIAL"/>
    <property type="match status" value="1"/>
</dbReference>
<dbReference type="Pfam" id="PF01743">
    <property type="entry name" value="PolyA_pol"/>
    <property type="match status" value="1"/>
</dbReference>
<dbReference type="Pfam" id="PF12627">
    <property type="entry name" value="PolyA_pol_RNAbd"/>
    <property type="match status" value="1"/>
</dbReference>
<dbReference type="Pfam" id="PF13735">
    <property type="entry name" value="tRNA_NucTran2_2"/>
    <property type="match status" value="1"/>
</dbReference>
<dbReference type="SUPFAM" id="SSF81301">
    <property type="entry name" value="Nucleotidyltransferase"/>
    <property type="match status" value="1"/>
</dbReference>
<dbReference type="SUPFAM" id="SSF81891">
    <property type="entry name" value="Poly A polymerase C-terminal region-like"/>
    <property type="match status" value="1"/>
</dbReference>
<reference key="1">
    <citation type="journal article" date="2008" name="Genome Biol.">
        <title>Encapsulated in silica: genome, proteome and physiology of the thermophilic bacterium Anoxybacillus flavithermus WK1.</title>
        <authorList>
            <person name="Saw J.H."/>
            <person name="Mountain B.W."/>
            <person name="Feng L."/>
            <person name="Omelchenko M.V."/>
            <person name="Hou S."/>
            <person name="Saito J.A."/>
            <person name="Stott M.B."/>
            <person name="Li D."/>
            <person name="Zhao G."/>
            <person name="Wu J."/>
            <person name="Galperin M.Y."/>
            <person name="Koonin E.V."/>
            <person name="Makarova K.S."/>
            <person name="Wolf Y.I."/>
            <person name="Rigden D.J."/>
            <person name="Dunfield P.F."/>
            <person name="Wang L."/>
            <person name="Alam M."/>
        </authorList>
    </citation>
    <scope>NUCLEOTIDE SEQUENCE [LARGE SCALE GENOMIC DNA]</scope>
    <source>
        <strain>DSM 21510 / WK1</strain>
    </source>
</reference>
<proteinExistence type="inferred from homology"/>
<organism>
    <name type="scientific">Anoxybacillus flavithermus (strain DSM 21510 / WK1)</name>
    <dbReference type="NCBI Taxonomy" id="491915"/>
    <lineage>
        <taxon>Bacteria</taxon>
        <taxon>Bacillati</taxon>
        <taxon>Bacillota</taxon>
        <taxon>Bacilli</taxon>
        <taxon>Bacillales</taxon>
        <taxon>Anoxybacillaceae</taxon>
        <taxon>Anoxybacillus</taxon>
    </lineage>
</organism>
<keyword id="KW-0067">ATP-binding</keyword>
<keyword id="KW-0460">Magnesium</keyword>
<keyword id="KW-0479">Metal-binding</keyword>
<keyword id="KW-0547">Nucleotide-binding</keyword>
<keyword id="KW-0548">Nucleotidyltransferase</keyword>
<keyword id="KW-0692">RNA repair</keyword>
<keyword id="KW-0694">RNA-binding</keyword>
<keyword id="KW-0808">Transferase</keyword>
<keyword id="KW-0819">tRNA processing</keyword>
<name>CCA_ANOFW</name>
<gene>
    <name evidence="1" type="primary">cca</name>
    <name type="ordered locus">Aflv_1124</name>
</gene>
<accession>B7GHS8</accession>
<protein>
    <recommendedName>
        <fullName evidence="1">CCA-adding enzyme</fullName>
        <ecNumber evidence="1">2.7.7.72</ecNumber>
    </recommendedName>
    <alternativeName>
        <fullName evidence="1">CCA tRNA nucleotidyltransferase</fullName>
    </alternativeName>
    <alternativeName>
        <fullName evidence="1">tRNA CCA-pyrophosphorylase</fullName>
    </alternativeName>
    <alternativeName>
        <fullName evidence="1">tRNA adenylyl-/cytidylyl- transferase</fullName>
    </alternativeName>
    <alternativeName>
        <fullName evidence="1">tRNA nucleotidyltransferase</fullName>
    </alternativeName>
    <alternativeName>
        <fullName evidence="1">tRNA-NT</fullName>
    </alternativeName>
</protein>